<evidence type="ECO:0000255" key="1">
    <source>
        <dbReference type="HAMAP-Rule" id="MF_00206"/>
    </source>
</evidence>
<evidence type="ECO:0000255" key="2">
    <source>
        <dbReference type="PROSITE-ProRule" id="PRU01266"/>
    </source>
</evidence>
<evidence type="ECO:0000269" key="3">
    <source>
    </source>
</evidence>
<evidence type="ECO:0000269" key="4">
    <source>
    </source>
</evidence>
<evidence type="ECO:0000303" key="5">
    <source>
    </source>
</evidence>
<evidence type="ECO:0007744" key="6">
    <source>
        <dbReference type="PDB" id="5EXI"/>
    </source>
</evidence>
<evidence type="ECO:0007744" key="7">
    <source>
        <dbReference type="PDB" id="5EXJ"/>
    </source>
</evidence>
<evidence type="ECO:0007744" key="8">
    <source>
        <dbReference type="PDB" id="5EXK"/>
    </source>
</evidence>
<evidence type="ECO:0007829" key="9">
    <source>
        <dbReference type="PDB" id="5EXJ"/>
    </source>
</evidence>
<evidence type="ECO:0007829" key="10">
    <source>
        <dbReference type="PDB" id="5EXK"/>
    </source>
</evidence>
<sequence length="311" mass="34719">MSVAAEGRRLLRLEVRNAQTPIERKPPWIKTRARIGPEYTELKNLVRREGLHTVCEEAGCPNIFECWEDREATFLIGGDQCTRRCDFCQIDTGKPAELDRDEPRRVADSVRTMGLRYATVTGVARDDLPDGGAWLYAATVRAIKELNPSTGVELLIPDFNGEPTRLAEVFESGPEVLAHNVETVPRIFKRIRPAFTYRRSLGVLTAARDAGLVTKSNLILGLGETSDEVRTALGDLRDAGCDIVTITQYLRPSARHHPVERWVKPEEFVQFARFAEGLGFAGVLAGPLVRSSYRAGRLYEQARNSRALASR</sequence>
<dbReference type="EC" id="2.8.1.8" evidence="1"/>
<dbReference type="EMBL" id="AL123456">
    <property type="protein sequence ID" value="CCP44995.1"/>
    <property type="molecule type" value="Genomic_DNA"/>
</dbReference>
<dbReference type="PIR" id="C70787">
    <property type="entry name" value="C70787"/>
</dbReference>
<dbReference type="RefSeq" id="NP_216734.1">
    <property type="nucleotide sequence ID" value="NC_000962.3"/>
</dbReference>
<dbReference type="RefSeq" id="WP_003411460.1">
    <property type="nucleotide sequence ID" value="NZ_NVQJ01000008.1"/>
</dbReference>
<dbReference type="PDB" id="5EXI">
    <property type="method" value="X-ray"/>
    <property type="resolution" value="2.28 A"/>
    <property type="chains" value="A=1-311"/>
</dbReference>
<dbReference type="PDB" id="5EXJ">
    <property type="method" value="X-ray"/>
    <property type="resolution" value="1.64 A"/>
    <property type="chains" value="A=1-311"/>
</dbReference>
<dbReference type="PDB" id="5EXK">
    <property type="method" value="X-ray"/>
    <property type="resolution" value="1.86 A"/>
    <property type="chains" value="A/C/E/G/I/K=1-311"/>
</dbReference>
<dbReference type="PDBsum" id="5EXI"/>
<dbReference type="PDBsum" id="5EXJ"/>
<dbReference type="PDBsum" id="5EXK"/>
<dbReference type="SMR" id="P9WK91"/>
<dbReference type="FunCoup" id="P9WK91">
    <property type="interactions" value="543"/>
</dbReference>
<dbReference type="STRING" id="83332.Rv2218"/>
<dbReference type="PaxDb" id="83332-Rv2218"/>
<dbReference type="DNASU" id="887922"/>
<dbReference type="GeneID" id="45426194"/>
<dbReference type="GeneID" id="887922"/>
<dbReference type="KEGG" id="mtu:Rv2218"/>
<dbReference type="KEGG" id="mtv:RVBD_2218"/>
<dbReference type="TubercuList" id="Rv2218"/>
<dbReference type="eggNOG" id="COG0320">
    <property type="taxonomic scope" value="Bacteria"/>
</dbReference>
<dbReference type="InParanoid" id="P9WK91"/>
<dbReference type="OrthoDB" id="9787898at2"/>
<dbReference type="PhylomeDB" id="P9WK91"/>
<dbReference type="BRENDA" id="2.8.1.8">
    <property type="organism ID" value="3445"/>
</dbReference>
<dbReference type="UniPathway" id="UPA00538">
    <property type="reaction ID" value="UER00593"/>
</dbReference>
<dbReference type="Proteomes" id="UP000001584">
    <property type="component" value="Chromosome"/>
</dbReference>
<dbReference type="GO" id="GO:0005737">
    <property type="term" value="C:cytoplasm"/>
    <property type="evidence" value="ECO:0007669"/>
    <property type="project" value="UniProtKB-SubCell"/>
</dbReference>
<dbReference type="GO" id="GO:0051539">
    <property type="term" value="F:4 iron, 4 sulfur cluster binding"/>
    <property type="evidence" value="ECO:0007669"/>
    <property type="project" value="UniProtKB-UniRule"/>
</dbReference>
<dbReference type="GO" id="GO:0016992">
    <property type="term" value="F:lipoate synthase activity"/>
    <property type="evidence" value="ECO:0007669"/>
    <property type="project" value="UniProtKB-UniRule"/>
</dbReference>
<dbReference type="GO" id="GO:0046872">
    <property type="term" value="F:metal ion binding"/>
    <property type="evidence" value="ECO:0007669"/>
    <property type="project" value="UniProtKB-KW"/>
</dbReference>
<dbReference type="CDD" id="cd01335">
    <property type="entry name" value="Radical_SAM"/>
    <property type="match status" value="1"/>
</dbReference>
<dbReference type="FunFam" id="3.20.20.70:FF:000116">
    <property type="entry name" value="Lipoyl synthase"/>
    <property type="match status" value="1"/>
</dbReference>
<dbReference type="Gene3D" id="3.20.20.70">
    <property type="entry name" value="Aldolase class I"/>
    <property type="match status" value="1"/>
</dbReference>
<dbReference type="HAMAP" id="MF_00206">
    <property type="entry name" value="Lipoyl_synth"/>
    <property type="match status" value="1"/>
</dbReference>
<dbReference type="InterPro" id="IPR013785">
    <property type="entry name" value="Aldolase_TIM"/>
</dbReference>
<dbReference type="InterPro" id="IPR006638">
    <property type="entry name" value="Elp3/MiaA/NifB-like_rSAM"/>
</dbReference>
<dbReference type="InterPro" id="IPR031691">
    <property type="entry name" value="LIAS_N"/>
</dbReference>
<dbReference type="InterPro" id="IPR003698">
    <property type="entry name" value="Lipoyl_synth"/>
</dbReference>
<dbReference type="InterPro" id="IPR007197">
    <property type="entry name" value="rSAM"/>
</dbReference>
<dbReference type="NCBIfam" id="TIGR00510">
    <property type="entry name" value="lipA"/>
    <property type="match status" value="1"/>
</dbReference>
<dbReference type="NCBIfam" id="NF004019">
    <property type="entry name" value="PRK05481.1"/>
    <property type="match status" value="1"/>
</dbReference>
<dbReference type="NCBIfam" id="NF009544">
    <property type="entry name" value="PRK12928.1"/>
    <property type="match status" value="1"/>
</dbReference>
<dbReference type="PANTHER" id="PTHR10949">
    <property type="entry name" value="LIPOYL SYNTHASE"/>
    <property type="match status" value="1"/>
</dbReference>
<dbReference type="PANTHER" id="PTHR10949:SF0">
    <property type="entry name" value="LIPOYL SYNTHASE, MITOCHONDRIAL"/>
    <property type="match status" value="1"/>
</dbReference>
<dbReference type="Pfam" id="PF16881">
    <property type="entry name" value="LIAS_N"/>
    <property type="match status" value="1"/>
</dbReference>
<dbReference type="Pfam" id="PF04055">
    <property type="entry name" value="Radical_SAM"/>
    <property type="match status" value="1"/>
</dbReference>
<dbReference type="PIRSF" id="PIRSF005963">
    <property type="entry name" value="Lipoyl_synth"/>
    <property type="match status" value="1"/>
</dbReference>
<dbReference type="SFLD" id="SFLDF00271">
    <property type="entry name" value="lipoyl_synthase"/>
    <property type="match status" value="1"/>
</dbReference>
<dbReference type="SFLD" id="SFLDS00029">
    <property type="entry name" value="Radical_SAM"/>
    <property type="match status" value="1"/>
</dbReference>
<dbReference type="SMART" id="SM00729">
    <property type="entry name" value="Elp3"/>
    <property type="match status" value="1"/>
</dbReference>
<dbReference type="SUPFAM" id="SSF102114">
    <property type="entry name" value="Radical SAM enzymes"/>
    <property type="match status" value="1"/>
</dbReference>
<dbReference type="PROSITE" id="PS51918">
    <property type="entry name" value="RADICAL_SAM"/>
    <property type="match status" value="1"/>
</dbReference>
<organism>
    <name type="scientific">Mycobacterium tuberculosis (strain ATCC 25618 / H37Rv)</name>
    <dbReference type="NCBI Taxonomy" id="83332"/>
    <lineage>
        <taxon>Bacteria</taxon>
        <taxon>Bacillati</taxon>
        <taxon>Actinomycetota</taxon>
        <taxon>Actinomycetes</taxon>
        <taxon>Mycobacteriales</taxon>
        <taxon>Mycobacteriaceae</taxon>
        <taxon>Mycobacterium</taxon>
        <taxon>Mycobacterium tuberculosis complex</taxon>
    </lineage>
</organism>
<accession>P9WK91</accession>
<accession>L0T964</accession>
<accession>P65283</accession>
<accession>Q10380</accession>
<comment type="function">
    <text evidence="1 3">Catalyzes the radical-mediated insertion of two sulfur atoms into the C-6 and C-8 positions of the octanoyl moiety bound to the lipoyl domains of lipoate-dependent enzymes, thereby converting the octanoylated domains into lipoylated derivatives.</text>
</comment>
<comment type="catalytic activity">
    <reaction evidence="1 3">
        <text>[[Fe-S] cluster scaffold protein carrying a second [4Fe-4S](2+) cluster] + N(6)-octanoyl-L-lysyl-[protein] + 2 oxidized [2Fe-2S]-[ferredoxin] + 2 S-adenosyl-L-methionine + 4 H(+) = [[Fe-S] cluster scaffold protein] + N(6)-[(R)-dihydrolipoyl]-L-lysyl-[protein] + 4 Fe(3+) + 2 hydrogen sulfide + 2 5'-deoxyadenosine + 2 L-methionine + 2 reduced [2Fe-2S]-[ferredoxin]</text>
        <dbReference type="Rhea" id="RHEA:16585"/>
        <dbReference type="Rhea" id="RHEA-COMP:9928"/>
        <dbReference type="Rhea" id="RHEA-COMP:10000"/>
        <dbReference type="Rhea" id="RHEA-COMP:10001"/>
        <dbReference type="Rhea" id="RHEA-COMP:10475"/>
        <dbReference type="Rhea" id="RHEA-COMP:14568"/>
        <dbReference type="Rhea" id="RHEA-COMP:14569"/>
        <dbReference type="ChEBI" id="CHEBI:15378"/>
        <dbReference type="ChEBI" id="CHEBI:17319"/>
        <dbReference type="ChEBI" id="CHEBI:29034"/>
        <dbReference type="ChEBI" id="CHEBI:29919"/>
        <dbReference type="ChEBI" id="CHEBI:33722"/>
        <dbReference type="ChEBI" id="CHEBI:33737"/>
        <dbReference type="ChEBI" id="CHEBI:33738"/>
        <dbReference type="ChEBI" id="CHEBI:57844"/>
        <dbReference type="ChEBI" id="CHEBI:59789"/>
        <dbReference type="ChEBI" id="CHEBI:78809"/>
        <dbReference type="ChEBI" id="CHEBI:83100"/>
        <dbReference type="EC" id="2.8.1.8"/>
    </reaction>
</comment>
<comment type="cofactor">
    <cofactor evidence="1 3">
        <name>[4Fe-4S] cluster</name>
        <dbReference type="ChEBI" id="CHEBI:49883"/>
    </cofactor>
    <text evidence="1 3 4">Binds 2 [4Fe-4S] clusters per subunit. One cluster is coordinated with 3 cysteines and an exchangeable S-adenosyl-L-methionine.</text>
</comment>
<comment type="pathway">
    <text evidence="1">Protein modification; protein lipoylation via endogenous pathway; protein N(6)-(lipoyl)lysine from octanoyl-[acyl-carrier-protein]: step 2/2.</text>
</comment>
<comment type="subunit">
    <text evidence="3">Forms a complex with GcvH, the H protein of the glycine cleavage system. The strength of association is dependent on the presence of S-adenosyl-L-methionine.</text>
</comment>
<comment type="subcellular location">
    <subcellularLocation>
        <location evidence="1">Cytoplasm</location>
    </subcellularLocation>
</comment>
<comment type="similarity">
    <text evidence="1">Belongs to the radical SAM superfamily. Lipoyl synthase family.</text>
</comment>
<feature type="chain" id="PRO_0000102326" description="Lipoyl synthase">
    <location>
        <begin position="1"/>
        <end position="311"/>
    </location>
</feature>
<feature type="domain" description="Radical SAM core" evidence="2">
    <location>
        <begin position="67"/>
        <end position="281"/>
    </location>
</feature>
<feature type="binding site" evidence="1 4 6 7">
    <location>
        <position position="55"/>
    </location>
    <ligand>
        <name>[4Fe-4S] cluster</name>
        <dbReference type="ChEBI" id="CHEBI:49883"/>
        <label>1</label>
    </ligand>
</feature>
<feature type="binding site" evidence="1 4 6 7">
    <location>
        <position position="60"/>
    </location>
    <ligand>
        <name>[4Fe-4S] cluster</name>
        <dbReference type="ChEBI" id="CHEBI:49883"/>
        <label>1</label>
    </ligand>
</feature>
<feature type="binding site" evidence="1 4 6 7">
    <location>
        <position position="66"/>
    </location>
    <ligand>
        <name>[4Fe-4S] cluster</name>
        <dbReference type="ChEBI" id="CHEBI:49883"/>
        <label>1</label>
    </ligand>
</feature>
<feature type="binding site" evidence="1 4 6 7 8">
    <location>
        <position position="81"/>
    </location>
    <ligand>
        <name>[4Fe-4S] cluster</name>
        <dbReference type="ChEBI" id="CHEBI:49883"/>
        <label>2</label>
        <note>4Fe-4S-S-AdoMet</note>
    </ligand>
</feature>
<feature type="binding site" evidence="1 4 6 7 8">
    <location>
        <position position="85"/>
    </location>
    <ligand>
        <name>[4Fe-4S] cluster</name>
        <dbReference type="ChEBI" id="CHEBI:49883"/>
        <label>2</label>
        <note>4Fe-4S-S-AdoMet</note>
    </ligand>
</feature>
<feature type="binding site" evidence="1 4 6 7 8">
    <location>
        <position position="88"/>
    </location>
    <ligand>
        <name>[4Fe-4S] cluster</name>
        <dbReference type="ChEBI" id="CHEBI:49883"/>
        <label>2</label>
        <note>4Fe-4S-S-AdoMet</note>
    </ligand>
</feature>
<feature type="binding site" evidence="1 4 6 7">
    <location>
        <position position="292"/>
    </location>
    <ligand>
        <name>[4Fe-4S] cluster</name>
        <dbReference type="ChEBI" id="CHEBI:49883"/>
        <label>1</label>
    </ligand>
</feature>
<feature type="helix" evidence="10">
    <location>
        <begin position="5"/>
        <end position="17"/>
    </location>
</feature>
<feature type="helix" evidence="9">
    <location>
        <begin position="37"/>
        <end position="49"/>
    </location>
</feature>
<feature type="helix" evidence="9">
    <location>
        <begin position="54"/>
        <end position="57"/>
    </location>
</feature>
<feature type="helix" evidence="9">
    <location>
        <begin position="63"/>
        <end position="68"/>
    </location>
</feature>
<feature type="strand" evidence="9">
    <location>
        <begin position="71"/>
        <end position="77"/>
    </location>
</feature>
<feature type="strand" evidence="9">
    <location>
        <begin position="79"/>
        <end position="83"/>
    </location>
</feature>
<feature type="strand" evidence="9">
    <location>
        <begin position="90"/>
        <end position="92"/>
    </location>
</feature>
<feature type="helix" evidence="9">
    <location>
        <begin position="102"/>
        <end position="113"/>
    </location>
</feature>
<feature type="strand" evidence="9">
    <location>
        <begin position="116"/>
        <end position="122"/>
    </location>
</feature>
<feature type="turn" evidence="9">
    <location>
        <begin position="129"/>
        <end position="132"/>
    </location>
</feature>
<feature type="helix" evidence="9">
    <location>
        <begin position="133"/>
        <end position="146"/>
    </location>
</feature>
<feature type="strand" evidence="9">
    <location>
        <begin position="151"/>
        <end position="155"/>
    </location>
</feature>
<feature type="helix" evidence="9">
    <location>
        <begin position="159"/>
        <end position="161"/>
    </location>
</feature>
<feature type="helix" evidence="9">
    <location>
        <begin position="163"/>
        <end position="171"/>
    </location>
</feature>
<feature type="strand" evidence="9">
    <location>
        <begin position="175"/>
        <end position="178"/>
    </location>
</feature>
<feature type="helix" evidence="9">
    <location>
        <begin position="185"/>
        <end position="191"/>
    </location>
</feature>
<feature type="helix" evidence="9">
    <location>
        <begin position="197"/>
        <end position="209"/>
    </location>
</feature>
<feature type="strand" evidence="9">
    <location>
        <begin position="213"/>
        <end position="223"/>
    </location>
</feature>
<feature type="helix" evidence="9">
    <location>
        <begin position="226"/>
        <end position="238"/>
    </location>
</feature>
<feature type="strand" evidence="9">
    <location>
        <begin position="243"/>
        <end position="248"/>
    </location>
</feature>
<feature type="helix" evidence="9">
    <location>
        <begin position="265"/>
        <end position="278"/>
    </location>
</feature>
<feature type="strand" evidence="9">
    <location>
        <begin position="281"/>
        <end position="286"/>
    </location>
</feature>
<feature type="turn" evidence="9">
    <location>
        <begin position="291"/>
        <end position="294"/>
    </location>
</feature>
<feature type="helix" evidence="9">
    <location>
        <begin position="295"/>
        <end position="309"/>
    </location>
</feature>
<name>LIPA_MYCTU</name>
<reference key="1">
    <citation type="journal article" date="1998" name="Nature">
        <title>Deciphering the biology of Mycobacterium tuberculosis from the complete genome sequence.</title>
        <authorList>
            <person name="Cole S.T."/>
            <person name="Brosch R."/>
            <person name="Parkhill J."/>
            <person name="Garnier T."/>
            <person name="Churcher C.M."/>
            <person name="Harris D.E."/>
            <person name="Gordon S.V."/>
            <person name="Eiglmeier K."/>
            <person name="Gas S."/>
            <person name="Barry C.E. III"/>
            <person name="Tekaia F."/>
            <person name="Badcock K."/>
            <person name="Basham D."/>
            <person name="Brown D."/>
            <person name="Chillingworth T."/>
            <person name="Connor R."/>
            <person name="Davies R.M."/>
            <person name="Devlin K."/>
            <person name="Feltwell T."/>
            <person name="Gentles S."/>
            <person name="Hamlin N."/>
            <person name="Holroyd S."/>
            <person name="Hornsby T."/>
            <person name="Jagels K."/>
            <person name="Krogh A."/>
            <person name="McLean J."/>
            <person name="Moule S."/>
            <person name="Murphy L.D."/>
            <person name="Oliver S."/>
            <person name="Osborne J."/>
            <person name="Quail M.A."/>
            <person name="Rajandream M.A."/>
            <person name="Rogers J."/>
            <person name="Rutter S."/>
            <person name="Seeger K."/>
            <person name="Skelton S."/>
            <person name="Squares S."/>
            <person name="Squares R."/>
            <person name="Sulston J.E."/>
            <person name="Taylor K."/>
            <person name="Whitehead S."/>
            <person name="Barrell B.G."/>
        </authorList>
    </citation>
    <scope>NUCLEOTIDE SEQUENCE [LARGE SCALE GENOMIC DNA]</scope>
    <source>
        <strain>ATCC 25618 / H37Rv</strain>
    </source>
</reference>
<reference key="2">
    <citation type="journal article" date="2011" name="Mol. Cell. Proteomics">
        <title>Proteogenomic analysis of Mycobacterium tuberculosis by high resolution mass spectrometry.</title>
        <authorList>
            <person name="Kelkar D.S."/>
            <person name="Kumar D."/>
            <person name="Kumar P."/>
            <person name="Balakrishnan L."/>
            <person name="Muthusamy B."/>
            <person name="Yadav A.K."/>
            <person name="Shrivastava P."/>
            <person name="Marimuthu A."/>
            <person name="Anand S."/>
            <person name="Sundaram H."/>
            <person name="Kingsbury R."/>
            <person name="Harsha H.C."/>
            <person name="Nair B."/>
            <person name="Prasad T.S."/>
            <person name="Chauhan D.S."/>
            <person name="Katoch K."/>
            <person name="Katoch V.M."/>
            <person name="Kumar P."/>
            <person name="Chaerkady R."/>
            <person name="Ramachandran S."/>
            <person name="Dash D."/>
            <person name="Pandey A."/>
        </authorList>
    </citation>
    <scope>IDENTIFICATION BY MASS SPECTROMETRY [LARGE SCALE ANALYSIS]</scope>
    <source>
        <strain>ATCC 25618 / H37Rv</strain>
    </source>
</reference>
<reference key="3">
    <citation type="journal article" date="2016" name="Biochemistry">
        <title>Characterization of lipoyl synthase from Mycobacterium tuberculosis.</title>
        <authorList>
            <person name="Lanz N.D."/>
            <person name="Lee K.H."/>
            <person name="Horstmann A.K."/>
            <person name="Pandelia M.E."/>
            <person name="Cicchillo R.M."/>
            <person name="Krebs C."/>
            <person name="Booker S.J."/>
        </authorList>
    </citation>
    <scope>FUNCTION</scope>
    <scope>CATALYTIC ACTIVITY</scope>
    <scope>COFACTOR</scope>
    <scope>INTERACTION WITH GCVH</scope>
</reference>
<reference evidence="6 7 8" key="4">
    <citation type="journal article" date="2016" name="Proc. Natl. Acad. Sci. U.S.A.">
        <title>Crystallographic snapshots of sulfur insertion by lipoyl synthase.</title>
        <authorList>
            <person name="McLaughlin M.I."/>
            <person name="Lanz N.D."/>
            <person name="Goldman P.J."/>
            <person name="Lee K.H."/>
            <person name="Booker S.J."/>
            <person name="Drennan C.L."/>
        </authorList>
    </citation>
    <scope>X-RAY CRYSTALLOGRAPHY (1.64 ANGSTROMS) IN COMPLEXES WITH IRON-SULFUR; SUBSTRATES AND PRODUCTS</scope>
    <scope>COFACTOR</scope>
</reference>
<gene>
    <name evidence="1 5" type="primary">lipA</name>
    <name type="ordered locus">Rv2218</name>
    <name type="ORF">MTCY190.29</name>
</gene>
<protein>
    <recommendedName>
        <fullName evidence="1 5">Lipoyl synthase</fullName>
        <ecNumber evidence="1">2.8.1.8</ecNumber>
    </recommendedName>
    <alternativeName>
        <fullName evidence="1">Lip-syn</fullName>
        <shortName evidence="1">LS</shortName>
    </alternativeName>
    <alternativeName>
        <fullName evidence="1">Lipoate synthase</fullName>
    </alternativeName>
    <alternativeName>
        <fullName evidence="1">Lipoic acid synthase</fullName>
    </alternativeName>
    <alternativeName>
        <fullName evidence="1">Sulfur insertion protein LipA</fullName>
    </alternativeName>
</protein>
<proteinExistence type="evidence at protein level"/>
<keyword id="KW-0002">3D-structure</keyword>
<keyword id="KW-0004">4Fe-4S</keyword>
<keyword id="KW-0963">Cytoplasm</keyword>
<keyword id="KW-0408">Iron</keyword>
<keyword id="KW-0411">Iron-sulfur</keyword>
<keyword id="KW-0479">Metal-binding</keyword>
<keyword id="KW-1185">Reference proteome</keyword>
<keyword id="KW-0949">S-adenosyl-L-methionine</keyword>
<keyword id="KW-0808">Transferase</keyword>